<accession>Q7U336</accession>
<keyword id="KW-0131">Cell cycle</keyword>
<keyword id="KW-0132">Cell division</keyword>
<keyword id="KW-0997">Cell inner membrane</keyword>
<keyword id="KW-1003">Cell membrane</keyword>
<keyword id="KW-0133">Cell shape</keyword>
<keyword id="KW-0961">Cell wall biogenesis/degradation</keyword>
<keyword id="KW-0328">Glycosyltransferase</keyword>
<keyword id="KW-0472">Membrane</keyword>
<keyword id="KW-0573">Peptidoglycan synthesis</keyword>
<keyword id="KW-1185">Reference proteome</keyword>
<keyword id="KW-0808">Transferase</keyword>
<name>MURG_HAEDU</name>
<feature type="chain" id="PRO_0000109176" description="UDP-N-acetylglucosamine--N-acetylmuramyl-(pentapeptide) pyrophosphoryl-undecaprenol N-acetylglucosamine transferase">
    <location>
        <begin position="1"/>
        <end position="355"/>
    </location>
</feature>
<feature type="binding site" evidence="1">
    <location>
        <begin position="12"/>
        <end position="14"/>
    </location>
    <ligand>
        <name>UDP-N-acetyl-alpha-D-glucosamine</name>
        <dbReference type="ChEBI" id="CHEBI:57705"/>
    </ligand>
</feature>
<feature type="binding site" evidence="1">
    <location>
        <position position="124"/>
    </location>
    <ligand>
        <name>UDP-N-acetyl-alpha-D-glucosamine</name>
        <dbReference type="ChEBI" id="CHEBI:57705"/>
    </ligand>
</feature>
<feature type="binding site" evidence="1">
    <location>
        <position position="160"/>
    </location>
    <ligand>
        <name>UDP-N-acetyl-alpha-D-glucosamine</name>
        <dbReference type="ChEBI" id="CHEBI:57705"/>
    </ligand>
</feature>
<feature type="binding site" evidence="1">
    <location>
        <position position="192"/>
    </location>
    <ligand>
        <name>UDP-N-acetyl-alpha-D-glucosamine</name>
        <dbReference type="ChEBI" id="CHEBI:57705"/>
    </ligand>
</feature>
<feature type="binding site" evidence="1">
    <location>
        <position position="243"/>
    </location>
    <ligand>
        <name>UDP-N-acetyl-alpha-D-glucosamine</name>
        <dbReference type="ChEBI" id="CHEBI:57705"/>
    </ligand>
</feature>
<feature type="binding site" evidence="1">
    <location>
        <begin position="262"/>
        <end position="267"/>
    </location>
    <ligand>
        <name>UDP-N-acetyl-alpha-D-glucosamine</name>
        <dbReference type="ChEBI" id="CHEBI:57705"/>
    </ligand>
</feature>
<feature type="binding site" evidence="1">
    <location>
        <position position="287"/>
    </location>
    <ligand>
        <name>UDP-N-acetyl-alpha-D-glucosamine</name>
        <dbReference type="ChEBI" id="CHEBI:57705"/>
    </ligand>
</feature>
<proteinExistence type="inferred from homology"/>
<gene>
    <name evidence="1" type="primary">murG</name>
    <name type="ordered locus">HD_0824</name>
</gene>
<comment type="function">
    <text evidence="1">Cell wall formation. Catalyzes the transfer of a GlcNAc subunit on undecaprenyl-pyrophosphoryl-MurNAc-pentapeptide (lipid intermediate I) to form undecaprenyl-pyrophosphoryl-MurNAc-(pentapeptide)GlcNAc (lipid intermediate II).</text>
</comment>
<comment type="catalytic activity">
    <reaction evidence="1">
        <text>di-trans,octa-cis-undecaprenyl diphospho-N-acetyl-alpha-D-muramoyl-L-alanyl-D-glutamyl-meso-2,6-diaminopimeloyl-D-alanyl-D-alanine + UDP-N-acetyl-alpha-D-glucosamine = di-trans,octa-cis-undecaprenyl diphospho-[N-acetyl-alpha-D-glucosaminyl-(1-&gt;4)]-N-acetyl-alpha-D-muramoyl-L-alanyl-D-glutamyl-meso-2,6-diaminopimeloyl-D-alanyl-D-alanine + UDP + H(+)</text>
        <dbReference type="Rhea" id="RHEA:31227"/>
        <dbReference type="ChEBI" id="CHEBI:15378"/>
        <dbReference type="ChEBI" id="CHEBI:57705"/>
        <dbReference type="ChEBI" id="CHEBI:58223"/>
        <dbReference type="ChEBI" id="CHEBI:61387"/>
        <dbReference type="ChEBI" id="CHEBI:61388"/>
        <dbReference type="EC" id="2.4.1.227"/>
    </reaction>
</comment>
<comment type="pathway">
    <text evidence="1">Cell wall biogenesis; peptidoglycan biosynthesis.</text>
</comment>
<comment type="subcellular location">
    <subcellularLocation>
        <location evidence="1">Cell inner membrane</location>
        <topology evidence="1">Peripheral membrane protein</topology>
        <orientation evidence="1">Cytoplasmic side</orientation>
    </subcellularLocation>
</comment>
<comment type="similarity">
    <text evidence="1">Belongs to the glycosyltransferase 28 family. MurG subfamily.</text>
</comment>
<dbReference type="EC" id="2.4.1.227" evidence="1"/>
<dbReference type="EMBL" id="AE017143">
    <property type="protein sequence ID" value="AAP95721.1"/>
    <property type="molecule type" value="Genomic_DNA"/>
</dbReference>
<dbReference type="RefSeq" id="WP_010944771.1">
    <property type="nucleotide sequence ID" value="NC_002940.2"/>
</dbReference>
<dbReference type="SMR" id="Q7U336"/>
<dbReference type="STRING" id="233412.HD_0824"/>
<dbReference type="CAZy" id="GT28">
    <property type="family name" value="Glycosyltransferase Family 28"/>
</dbReference>
<dbReference type="KEGG" id="hdu:HD_0824"/>
<dbReference type="eggNOG" id="COG0707">
    <property type="taxonomic scope" value="Bacteria"/>
</dbReference>
<dbReference type="HOGENOM" id="CLU_037404_2_0_6"/>
<dbReference type="OrthoDB" id="9808936at2"/>
<dbReference type="UniPathway" id="UPA00219"/>
<dbReference type="Proteomes" id="UP000001022">
    <property type="component" value="Chromosome"/>
</dbReference>
<dbReference type="GO" id="GO:0005886">
    <property type="term" value="C:plasma membrane"/>
    <property type="evidence" value="ECO:0007669"/>
    <property type="project" value="UniProtKB-SubCell"/>
</dbReference>
<dbReference type="GO" id="GO:0051991">
    <property type="term" value="F:UDP-N-acetyl-D-glucosamine:N-acetylmuramoyl-L-alanyl-D-glutamyl-meso-2,6-diaminopimelyl-D-alanyl-D-alanine-diphosphoundecaprenol 4-beta-N-acetylglucosaminlytransferase activity"/>
    <property type="evidence" value="ECO:0007669"/>
    <property type="project" value="RHEA"/>
</dbReference>
<dbReference type="GO" id="GO:0050511">
    <property type="term" value="F:undecaprenyldiphospho-muramoylpentapeptide beta-N-acetylglucosaminyltransferase activity"/>
    <property type="evidence" value="ECO:0007669"/>
    <property type="project" value="UniProtKB-UniRule"/>
</dbReference>
<dbReference type="GO" id="GO:0005975">
    <property type="term" value="P:carbohydrate metabolic process"/>
    <property type="evidence" value="ECO:0007669"/>
    <property type="project" value="InterPro"/>
</dbReference>
<dbReference type="GO" id="GO:0051301">
    <property type="term" value="P:cell division"/>
    <property type="evidence" value="ECO:0007669"/>
    <property type="project" value="UniProtKB-KW"/>
</dbReference>
<dbReference type="GO" id="GO:0071555">
    <property type="term" value="P:cell wall organization"/>
    <property type="evidence" value="ECO:0007669"/>
    <property type="project" value="UniProtKB-KW"/>
</dbReference>
<dbReference type="GO" id="GO:0030259">
    <property type="term" value="P:lipid glycosylation"/>
    <property type="evidence" value="ECO:0007669"/>
    <property type="project" value="UniProtKB-UniRule"/>
</dbReference>
<dbReference type="GO" id="GO:0009252">
    <property type="term" value="P:peptidoglycan biosynthetic process"/>
    <property type="evidence" value="ECO:0007669"/>
    <property type="project" value="UniProtKB-UniRule"/>
</dbReference>
<dbReference type="GO" id="GO:0008360">
    <property type="term" value="P:regulation of cell shape"/>
    <property type="evidence" value="ECO:0007669"/>
    <property type="project" value="UniProtKB-KW"/>
</dbReference>
<dbReference type="CDD" id="cd03785">
    <property type="entry name" value="GT28_MurG"/>
    <property type="match status" value="1"/>
</dbReference>
<dbReference type="Gene3D" id="3.40.50.2000">
    <property type="entry name" value="Glycogen Phosphorylase B"/>
    <property type="match status" value="2"/>
</dbReference>
<dbReference type="HAMAP" id="MF_00033">
    <property type="entry name" value="MurG"/>
    <property type="match status" value="1"/>
</dbReference>
<dbReference type="InterPro" id="IPR006009">
    <property type="entry name" value="GlcNAc_MurG"/>
</dbReference>
<dbReference type="InterPro" id="IPR007235">
    <property type="entry name" value="Glyco_trans_28_C"/>
</dbReference>
<dbReference type="InterPro" id="IPR004276">
    <property type="entry name" value="GlycoTrans_28_N"/>
</dbReference>
<dbReference type="NCBIfam" id="TIGR01133">
    <property type="entry name" value="murG"/>
    <property type="match status" value="1"/>
</dbReference>
<dbReference type="PANTHER" id="PTHR21015:SF22">
    <property type="entry name" value="GLYCOSYLTRANSFERASE"/>
    <property type="match status" value="1"/>
</dbReference>
<dbReference type="PANTHER" id="PTHR21015">
    <property type="entry name" value="UDP-N-ACETYLGLUCOSAMINE--N-ACETYLMURAMYL-(PENTAPEPTIDE) PYROPHOSPHORYL-UNDECAPRENOL N-ACETYLGLUCOSAMINE TRANSFERASE 1"/>
    <property type="match status" value="1"/>
</dbReference>
<dbReference type="Pfam" id="PF04101">
    <property type="entry name" value="Glyco_tran_28_C"/>
    <property type="match status" value="1"/>
</dbReference>
<dbReference type="Pfam" id="PF03033">
    <property type="entry name" value="Glyco_transf_28"/>
    <property type="match status" value="1"/>
</dbReference>
<dbReference type="SUPFAM" id="SSF53756">
    <property type="entry name" value="UDP-Glycosyltransferase/glycogen phosphorylase"/>
    <property type="match status" value="1"/>
</dbReference>
<protein>
    <recommendedName>
        <fullName evidence="1">UDP-N-acetylglucosamine--N-acetylmuramyl-(pentapeptide) pyrophosphoryl-undecaprenol N-acetylglucosamine transferase</fullName>
        <ecNumber evidence="1">2.4.1.227</ecNumber>
    </recommendedName>
    <alternativeName>
        <fullName evidence="1">Undecaprenyl-PP-MurNAc-pentapeptide-UDPGlcNAc GlcNAc transferase</fullName>
    </alternativeName>
</protein>
<evidence type="ECO:0000255" key="1">
    <source>
        <dbReference type="HAMAP-Rule" id="MF_00033"/>
    </source>
</evidence>
<sequence>MSKKLLIMAGGTGGHVFPAIAVAQELQKQGWQICWLGTKDRMEAELVPQYNIPIEFIQISGLKGKGVLALIKAPFTILKAVLQALNIIKKYRPDAVLGMGGYVSGPGGIAARLCNVPIVLHEQNAIAGLTNVWLAKIAKRVLQAFPTAFAKAETVGNPVRKDLSELLDPAQRFKARATAEPYPLNILVMGGSQGARIINQTIPEVAKALGNAIFIRHQAGKGNLRTISDVYKQADNVSVTEFIDDMAEAYNWADLVICRSGALTVCEIAAAGLPAIFVPYQHKDRQQYLNATYLANVGAAIIVEQPDFTAENLLNILQPLIKDRQKLTEMAIKAHTKATPKAAQRVAEVIIEVSK</sequence>
<organism>
    <name type="scientific">Haemophilus ducreyi (strain 35000HP / ATCC 700724)</name>
    <dbReference type="NCBI Taxonomy" id="233412"/>
    <lineage>
        <taxon>Bacteria</taxon>
        <taxon>Pseudomonadati</taxon>
        <taxon>Pseudomonadota</taxon>
        <taxon>Gammaproteobacteria</taxon>
        <taxon>Pasteurellales</taxon>
        <taxon>Pasteurellaceae</taxon>
        <taxon>Haemophilus</taxon>
    </lineage>
</organism>
<reference key="1">
    <citation type="submission" date="2003-06" db="EMBL/GenBank/DDBJ databases">
        <title>The complete genome sequence of Haemophilus ducreyi.</title>
        <authorList>
            <person name="Munson R.S. Jr."/>
            <person name="Ray W.C."/>
            <person name="Mahairas G."/>
            <person name="Sabo P."/>
            <person name="Mungur R."/>
            <person name="Johnson L."/>
            <person name="Nguyen D."/>
            <person name="Wang J."/>
            <person name="Forst C."/>
            <person name="Hood L."/>
        </authorList>
    </citation>
    <scope>NUCLEOTIDE SEQUENCE [LARGE SCALE GENOMIC DNA]</scope>
    <source>
        <strain>35000HP / ATCC 700724</strain>
    </source>
</reference>